<reference key="1">
    <citation type="journal article" date="1993" name="Genomics">
        <title>DNA sequence and analysis of 136 kilobases of the Escherichia coli genome: organizational symmetry around the origin of replication.</title>
        <authorList>
            <person name="Burland V.D."/>
            <person name="Plunkett G. III"/>
            <person name="Daniels D.L."/>
            <person name="Blattner F.R."/>
        </authorList>
    </citation>
    <scope>NUCLEOTIDE SEQUENCE [LARGE SCALE GENOMIC DNA]</scope>
    <source>
        <strain>K12 / MG1655 / ATCC 47076</strain>
    </source>
</reference>
<reference key="2">
    <citation type="journal article" date="1997" name="Science">
        <title>The complete genome sequence of Escherichia coli K-12.</title>
        <authorList>
            <person name="Blattner F.R."/>
            <person name="Plunkett G. III"/>
            <person name="Bloch C.A."/>
            <person name="Perna N.T."/>
            <person name="Burland V."/>
            <person name="Riley M."/>
            <person name="Collado-Vides J."/>
            <person name="Glasner J.D."/>
            <person name="Rode C.K."/>
            <person name="Mayhew G.F."/>
            <person name="Gregor J."/>
            <person name="Davis N.W."/>
            <person name="Kirkpatrick H.A."/>
            <person name="Goeden M.A."/>
            <person name="Rose D.J."/>
            <person name="Mau B."/>
            <person name="Shao Y."/>
        </authorList>
    </citation>
    <scope>NUCLEOTIDE SEQUENCE [LARGE SCALE GENOMIC DNA]</scope>
    <source>
        <strain>K12 / MG1655 / ATCC 47076</strain>
    </source>
</reference>
<reference key="3">
    <citation type="journal article" date="2006" name="Mol. Syst. Biol.">
        <title>Highly accurate genome sequences of Escherichia coli K-12 strains MG1655 and W3110.</title>
        <authorList>
            <person name="Hayashi K."/>
            <person name="Morooka N."/>
            <person name="Yamamoto Y."/>
            <person name="Fujita K."/>
            <person name="Isono K."/>
            <person name="Choi S."/>
            <person name="Ohtsubo E."/>
            <person name="Baba T."/>
            <person name="Wanner B.L."/>
            <person name="Mori H."/>
            <person name="Horiuchi T."/>
        </authorList>
    </citation>
    <scope>NUCLEOTIDE SEQUENCE [LARGE SCALE GENOMIC DNA]</scope>
    <source>
        <strain>K12 / W3110 / ATCC 27325 / DSM 5911</strain>
    </source>
</reference>
<reference key="4">
    <citation type="journal article" date="2001" name="J. Bacteriol.">
        <title>Analysis of a complete library of putative drug transporter genes in Escherichia coli.</title>
        <authorList>
            <person name="Nishino K."/>
            <person name="Yamaguchi A."/>
        </authorList>
    </citation>
    <scope>FUNCTION</scope>
</reference>
<reference key="5">
    <citation type="journal article" date="2005" name="Science">
        <title>Global topology analysis of the Escherichia coli inner membrane proteome.</title>
        <authorList>
            <person name="Daley D.O."/>
            <person name="Rapp M."/>
            <person name="Granseth E."/>
            <person name="Melen K."/>
            <person name="Drew D."/>
            <person name="von Heijne G."/>
        </authorList>
    </citation>
    <scope>TOPOLOGY [LARGE SCALE ANALYSIS]</scope>
    <source>
        <strain>K12 / MG1655 / ATCC 47076</strain>
    </source>
</reference>
<sequence>MSRFLICSFALVLLYPAGIDMYLVGLPRIAADLNASEAQLHIAFSVYLAGMAAAMLFAGKVADRSGRKPVAIPGAALFIIASVFCSLAETSTLFLAGRFLQGLGAGCCYVVAFAILRDTLDDRRRAKVLSLLNGITCIIPVLAPVLGHLIMLKFPWQSLFWAMAMMGIAVLMLSLFILKETRPAAPAASDKPRENSESLLNRFFLSRVVITTLSVSVILTFVNTSPVLLMEIMGFERGEYATIMALTAGVSMTVSFSTPFALGIFKPRTLMITSQVLFLAAGITLAVSPSHAVSLFGITLICAGFSVGFGVAMSQALGPFSLRAGVASSTLGIAQVCGSSLWIWLAAVVGIGAWNMLIGILIACSIVSLLLIMFVAPGRPVAAHEEIHHHA</sequence>
<keyword id="KW-0046">Antibiotic resistance</keyword>
<keyword id="KW-0997">Cell inner membrane</keyword>
<keyword id="KW-1003">Cell membrane</keyword>
<keyword id="KW-0472">Membrane</keyword>
<keyword id="KW-1185">Reference proteome</keyword>
<keyword id="KW-0812">Transmembrane</keyword>
<keyword id="KW-1133">Transmembrane helix</keyword>
<keyword id="KW-0813">Transport</keyword>
<organism>
    <name type="scientific">Escherichia coli (strain K12)</name>
    <dbReference type="NCBI Taxonomy" id="83333"/>
    <lineage>
        <taxon>Bacteria</taxon>
        <taxon>Pseudomonadati</taxon>
        <taxon>Pseudomonadota</taxon>
        <taxon>Gammaproteobacteria</taxon>
        <taxon>Enterobacterales</taxon>
        <taxon>Enterobacteriaceae</taxon>
        <taxon>Escherichia</taxon>
    </lineage>
</organism>
<evidence type="ECO:0000255" key="1"/>
<evidence type="ECO:0000269" key="2">
    <source>
    </source>
</evidence>
<evidence type="ECO:0000305" key="3"/>
<accession>P31462</accession>
<accession>P76739</accession>
<accession>Q2M826</accession>
<proteinExistence type="evidence at protein level"/>
<feature type="chain" id="PRO_0000173354" description="Multidrug resistance protein MdtL">
    <location>
        <begin position="1"/>
        <end position="391"/>
    </location>
</feature>
<feature type="topological domain" description="Cytoplasmic" evidence="1">
    <location>
        <begin position="1"/>
        <end position="3"/>
    </location>
</feature>
<feature type="transmembrane region" description="Helical" evidence="1">
    <location>
        <begin position="4"/>
        <end position="24"/>
    </location>
</feature>
<feature type="topological domain" description="Periplasmic" evidence="1">
    <location>
        <begin position="25"/>
        <end position="41"/>
    </location>
</feature>
<feature type="transmembrane region" description="Helical" evidence="1">
    <location>
        <begin position="42"/>
        <end position="62"/>
    </location>
</feature>
<feature type="topological domain" description="Cytoplasmic" evidence="1">
    <location>
        <begin position="63"/>
        <end position="68"/>
    </location>
</feature>
<feature type="transmembrane region" description="Helical" evidence="1">
    <location>
        <begin position="69"/>
        <end position="89"/>
    </location>
</feature>
<feature type="topological domain" description="Periplasmic" evidence="1">
    <location>
        <begin position="90"/>
        <end position="92"/>
    </location>
</feature>
<feature type="transmembrane region" description="Helical" evidence="1">
    <location>
        <begin position="93"/>
        <end position="113"/>
    </location>
</feature>
<feature type="topological domain" description="Cytoplasmic" evidence="1">
    <location>
        <begin position="114"/>
        <end position="130"/>
    </location>
</feature>
<feature type="transmembrane region" description="Helical" evidence="1">
    <location>
        <begin position="131"/>
        <end position="151"/>
    </location>
</feature>
<feature type="topological domain" description="Periplasmic" evidence="1">
    <location>
        <begin position="152"/>
        <end position="157"/>
    </location>
</feature>
<feature type="transmembrane region" description="Helical" evidence="1">
    <location>
        <begin position="158"/>
        <end position="178"/>
    </location>
</feature>
<feature type="topological domain" description="Cytoplasmic" evidence="1">
    <location>
        <begin position="179"/>
        <end position="202"/>
    </location>
</feature>
<feature type="transmembrane region" description="Helical" evidence="1">
    <location>
        <begin position="203"/>
        <end position="222"/>
    </location>
</feature>
<feature type="topological domain" description="Periplasmic" evidence="1">
    <location>
        <begin position="223"/>
        <end position="244"/>
    </location>
</feature>
<feature type="transmembrane region" description="Helical" evidence="1">
    <location>
        <begin position="245"/>
        <end position="265"/>
    </location>
</feature>
<feature type="topological domain" description="Cytoplasmic" evidence="1">
    <location>
        <begin position="266"/>
        <end position="268"/>
    </location>
</feature>
<feature type="transmembrane region" description="Helical" evidence="1">
    <location>
        <begin position="269"/>
        <end position="289"/>
    </location>
</feature>
<feature type="topological domain" description="Periplasmic" evidence="1">
    <location>
        <begin position="290"/>
        <end position="292"/>
    </location>
</feature>
<feature type="transmembrane region" description="Helical" evidence="1">
    <location>
        <begin position="293"/>
        <end position="313"/>
    </location>
</feature>
<feature type="topological domain" description="Cytoplasmic" evidence="1">
    <location>
        <begin position="314"/>
        <end position="330"/>
    </location>
</feature>
<feature type="transmembrane region" description="Helical" evidence="1">
    <location>
        <begin position="331"/>
        <end position="351"/>
    </location>
</feature>
<feature type="topological domain" description="Periplasmic" evidence="1">
    <location>
        <begin position="352"/>
        <end position="355"/>
    </location>
</feature>
<feature type="transmembrane region" description="Helical" evidence="1">
    <location>
        <begin position="356"/>
        <end position="376"/>
    </location>
</feature>
<feature type="topological domain" description="Cytoplasmic" evidence="1">
    <location>
        <begin position="377"/>
        <end position="391"/>
    </location>
</feature>
<name>MDTL_ECOLI</name>
<gene>
    <name type="primary">mdtL</name>
    <name type="synonym">yidY</name>
    <name type="ordered locus">b3710</name>
    <name type="ordered locus">JW3688</name>
</gene>
<protein>
    <recommendedName>
        <fullName>Multidrug resistance protein MdtL</fullName>
    </recommendedName>
</protein>
<dbReference type="EMBL" id="L10328">
    <property type="protein sequence ID" value="AAA62061.1"/>
    <property type="molecule type" value="Genomic_DNA"/>
</dbReference>
<dbReference type="EMBL" id="U00096">
    <property type="protein sequence ID" value="AAC76733.1"/>
    <property type="molecule type" value="Genomic_DNA"/>
</dbReference>
<dbReference type="EMBL" id="AP009048">
    <property type="protein sequence ID" value="BAE77580.1"/>
    <property type="molecule type" value="Genomic_DNA"/>
</dbReference>
<dbReference type="PIR" id="G65173">
    <property type="entry name" value="G65173"/>
</dbReference>
<dbReference type="RefSeq" id="NP_418166.1">
    <property type="nucleotide sequence ID" value="NC_000913.3"/>
</dbReference>
<dbReference type="RefSeq" id="WP_000085982.1">
    <property type="nucleotide sequence ID" value="NZ_STEB01000015.1"/>
</dbReference>
<dbReference type="SMR" id="P31462"/>
<dbReference type="BioGRID" id="4262213">
    <property type="interactions" value="171"/>
</dbReference>
<dbReference type="DIP" id="DIP-12457N"/>
<dbReference type="FunCoup" id="P31462">
    <property type="interactions" value="198"/>
</dbReference>
<dbReference type="IntAct" id="P31462">
    <property type="interactions" value="1"/>
</dbReference>
<dbReference type="STRING" id="511145.b3710"/>
<dbReference type="TCDB" id="2.A.1.2.22">
    <property type="family name" value="the major facilitator superfamily (mfs)"/>
</dbReference>
<dbReference type="PaxDb" id="511145-b3710"/>
<dbReference type="EnsemblBacteria" id="AAC76733">
    <property type="protein sequence ID" value="AAC76733"/>
    <property type="gene ID" value="b3710"/>
</dbReference>
<dbReference type="GeneID" id="948219"/>
<dbReference type="KEGG" id="ecj:JW3688"/>
<dbReference type="KEGG" id="eco:b3710"/>
<dbReference type="KEGG" id="ecoc:C3026_20115"/>
<dbReference type="PATRIC" id="fig|1411691.4.peg.2991"/>
<dbReference type="EchoBASE" id="EB1671"/>
<dbReference type="eggNOG" id="COG2814">
    <property type="taxonomic scope" value="Bacteria"/>
</dbReference>
<dbReference type="HOGENOM" id="CLU_001265_47_1_6"/>
<dbReference type="InParanoid" id="P31462"/>
<dbReference type="OMA" id="SGIDMYL"/>
<dbReference type="OrthoDB" id="9814303at2"/>
<dbReference type="PhylomeDB" id="P31462"/>
<dbReference type="BioCyc" id="EcoCyc:YIDY-MONOMER"/>
<dbReference type="BioCyc" id="MetaCyc:YIDY-MONOMER"/>
<dbReference type="PRO" id="PR:P31462"/>
<dbReference type="Proteomes" id="UP000000625">
    <property type="component" value="Chromosome"/>
</dbReference>
<dbReference type="GO" id="GO:0005886">
    <property type="term" value="C:plasma membrane"/>
    <property type="evidence" value="ECO:0000314"/>
    <property type="project" value="EcoCyc"/>
</dbReference>
<dbReference type="GO" id="GO:0022857">
    <property type="term" value="F:transmembrane transporter activity"/>
    <property type="evidence" value="ECO:0000318"/>
    <property type="project" value="GO_Central"/>
</dbReference>
<dbReference type="GO" id="GO:0046677">
    <property type="term" value="P:response to antibiotic"/>
    <property type="evidence" value="ECO:0007669"/>
    <property type="project" value="UniProtKB-KW"/>
</dbReference>
<dbReference type="GO" id="GO:1990961">
    <property type="term" value="P:xenobiotic detoxification by transmembrane export across the plasma membrane"/>
    <property type="evidence" value="ECO:0000318"/>
    <property type="project" value="GO_Central"/>
</dbReference>
<dbReference type="CDD" id="cd17320">
    <property type="entry name" value="MFS_MdfA_MDR_like"/>
    <property type="match status" value="1"/>
</dbReference>
<dbReference type="FunFam" id="1.20.1720.10:FF:000003">
    <property type="entry name" value="Multidrug resistance protein MdtL"/>
    <property type="match status" value="1"/>
</dbReference>
<dbReference type="Gene3D" id="1.20.1720.10">
    <property type="entry name" value="Multidrug resistance protein D"/>
    <property type="match status" value="1"/>
</dbReference>
<dbReference type="HAMAP" id="MF_01530">
    <property type="entry name" value="MFS_MdtL"/>
    <property type="match status" value="1"/>
</dbReference>
<dbReference type="InterPro" id="IPR011701">
    <property type="entry name" value="MFS"/>
</dbReference>
<dbReference type="InterPro" id="IPR020846">
    <property type="entry name" value="MFS_dom"/>
</dbReference>
<dbReference type="InterPro" id="IPR050189">
    <property type="entry name" value="MFS_Efflux_Transporters"/>
</dbReference>
<dbReference type="InterPro" id="IPR036259">
    <property type="entry name" value="MFS_trans_sf"/>
</dbReference>
<dbReference type="InterPro" id="IPR023697">
    <property type="entry name" value="Multidrug-R_MdtL"/>
</dbReference>
<dbReference type="NCBIfam" id="NF007782">
    <property type="entry name" value="PRK10473.1"/>
    <property type="match status" value="1"/>
</dbReference>
<dbReference type="PANTHER" id="PTHR43124:SF3">
    <property type="entry name" value="CHLORAMPHENICOL EFFLUX PUMP RV0191"/>
    <property type="match status" value="1"/>
</dbReference>
<dbReference type="PANTHER" id="PTHR43124">
    <property type="entry name" value="PURINE EFFLUX PUMP PBUE"/>
    <property type="match status" value="1"/>
</dbReference>
<dbReference type="Pfam" id="PF07690">
    <property type="entry name" value="MFS_1"/>
    <property type="match status" value="1"/>
</dbReference>
<dbReference type="SUPFAM" id="SSF103473">
    <property type="entry name" value="MFS general substrate transporter"/>
    <property type="match status" value="1"/>
</dbReference>
<dbReference type="PROSITE" id="PS50850">
    <property type="entry name" value="MFS"/>
    <property type="match status" value="1"/>
</dbReference>
<comment type="function">
    <text evidence="2">Confers resistance to chloramphenicol.</text>
</comment>
<comment type="subcellular location">
    <subcellularLocation>
        <location>Cell inner membrane</location>
        <topology>Multi-pass membrane protein</topology>
    </subcellularLocation>
</comment>
<comment type="similarity">
    <text evidence="3">Belongs to the major facilitator superfamily. DHA1 family. MdtL (TC 2.A.1.2.22) subfamily.</text>
</comment>